<evidence type="ECO:0000305" key="1"/>
<keyword id="KW-1185">Reference proteome</keyword>
<keyword id="KW-0677">Repeat</keyword>
<accession>Q0WN01</accession>
<accession>Q9M2F7</accession>
<name>PP286_ARATH</name>
<protein>
    <recommendedName>
        <fullName>Pentatricopeptide repeat-containing protein At3g58590</fullName>
    </recommendedName>
</protein>
<sequence length="741" mass="82690">MSLSCGDLANHNDRVVSLLNVCRKAPSFARTKALHALSITLCSVLLQPVYVCNNIISLYEKLGEVSLAGKVFDQMPERNKVSFNTIIKGYSKYGDVDKAWGVFSEMRYFGYLPNQSTVSGLLSCASLDVRAGTQLHGLSLKYGLFMADAFVGTCLLCLYGRLDLLEMAEQVFEDMPFKSLETWNHMMSLLGHRGFLKECMFFFRELVRMGASLTESSFLGVLKGVSCVKDLDISKQLHCSATKKGLDCEISVVNSLISAYGKCGNTHMAERMFQDAGSWDIVSWNAIICATAKSENPLKALKLFVSMPEHGFSPNQGTYVSVLGVSSLVQLLSCGRQIHGMLIKNGCETGIVLGNALIDFYAKCGNLEDSRLCFDYIRDKNIVCWNALLSGYANKDGPICLSLFLQMLQMGFRPTEYTFSTALKSCCVTELQQLHSVIVRMGYEDNDYVLSSLMRSYAKNQLMNDALLLLDWASGPTSVVPLNIVAGIYSRRGQYHESVKLISTLEQPDTVSWNIAIAACSRSDYHEEVIELFKHMLQSNIRPDKYTFVSILSLCSKLCDLTLGSSIHGLITKTDFSCADTFVCNVLIDMYGKCGSIRSVMKVFEETREKNLITWTALISCLGIHGYGQEALEKFKETLSLGFKPDRVSFISILTACRHGGMVKEGMGLFQKMKDYGVEPEMDHYRCAVDLLARNGYLKEAEHLIREMPFPADAPVWRTFLDGCNRFAEEQRNTLNVVSFQ</sequence>
<comment type="similarity">
    <text evidence="1">Belongs to the PPR family. P subfamily.</text>
</comment>
<comment type="sequence caution" evidence="1">
    <conflict type="erroneous gene model prediction">
        <sequence resource="EMBL-CDS" id="CAB68197"/>
    </conflict>
</comment>
<comment type="online information" name="Pentatricopeptide repeat proteins">
    <link uri="https://ppr.plantenergy.uwa.edu.au"/>
</comment>
<organism>
    <name type="scientific">Arabidopsis thaliana</name>
    <name type="common">Mouse-ear cress</name>
    <dbReference type="NCBI Taxonomy" id="3702"/>
    <lineage>
        <taxon>Eukaryota</taxon>
        <taxon>Viridiplantae</taxon>
        <taxon>Streptophyta</taxon>
        <taxon>Embryophyta</taxon>
        <taxon>Tracheophyta</taxon>
        <taxon>Spermatophyta</taxon>
        <taxon>Magnoliopsida</taxon>
        <taxon>eudicotyledons</taxon>
        <taxon>Gunneridae</taxon>
        <taxon>Pentapetalae</taxon>
        <taxon>rosids</taxon>
        <taxon>malvids</taxon>
        <taxon>Brassicales</taxon>
        <taxon>Brassicaceae</taxon>
        <taxon>Camelineae</taxon>
        <taxon>Arabidopsis</taxon>
    </lineage>
</organism>
<proteinExistence type="evidence at transcript level"/>
<reference key="1">
    <citation type="journal article" date="2000" name="Nature">
        <title>Sequence and analysis of chromosome 3 of the plant Arabidopsis thaliana.</title>
        <authorList>
            <person name="Salanoubat M."/>
            <person name="Lemcke K."/>
            <person name="Rieger M."/>
            <person name="Ansorge W."/>
            <person name="Unseld M."/>
            <person name="Fartmann B."/>
            <person name="Valle G."/>
            <person name="Bloecker H."/>
            <person name="Perez-Alonso M."/>
            <person name="Obermaier B."/>
            <person name="Delseny M."/>
            <person name="Boutry M."/>
            <person name="Grivell L.A."/>
            <person name="Mache R."/>
            <person name="Puigdomenech P."/>
            <person name="De Simone V."/>
            <person name="Choisne N."/>
            <person name="Artiguenave F."/>
            <person name="Robert C."/>
            <person name="Brottier P."/>
            <person name="Wincker P."/>
            <person name="Cattolico L."/>
            <person name="Weissenbach J."/>
            <person name="Saurin W."/>
            <person name="Quetier F."/>
            <person name="Schaefer M."/>
            <person name="Mueller-Auer S."/>
            <person name="Gabel C."/>
            <person name="Fuchs M."/>
            <person name="Benes V."/>
            <person name="Wurmbach E."/>
            <person name="Drzonek H."/>
            <person name="Erfle H."/>
            <person name="Jordan N."/>
            <person name="Bangert S."/>
            <person name="Wiedelmann R."/>
            <person name="Kranz H."/>
            <person name="Voss H."/>
            <person name="Holland R."/>
            <person name="Brandt P."/>
            <person name="Nyakatura G."/>
            <person name="Vezzi A."/>
            <person name="D'Angelo M."/>
            <person name="Pallavicini A."/>
            <person name="Toppo S."/>
            <person name="Simionati B."/>
            <person name="Conrad A."/>
            <person name="Hornischer K."/>
            <person name="Kauer G."/>
            <person name="Loehnert T.-H."/>
            <person name="Nordsiek G."/>
            <person name="Reichelt J."/>
            <person name="Scharfe M."/>
            <person name="Schoen O."/>
            <person name="Bargues M."/>
            <person name="Terol J."/>
            <person name="Climent J."/>
            <person name="Navarro P."/>
            <person name="Collado C."/>
            <person name="Perez-Perez A."/>
            <person name="Ottenwaelder B."/>
            <person name="Duchemin D."/>
            <person name="Cooke R."/>
            <person name="Laudie M."/>
            <person name="Berger-Llauro C."/>
            <person name="Purnelle B."/>
            <person name="Masuy D."/>
            <person name="de Haan M."/>
            <person name="Maarse A.C."/>
            <person name="Alcaraz J.-P."/>
            <person name="Cottet A."/>
            <person name="Casacuberta E."/>
            <person name="Monfort A."/>
            <person name="Argiriou A."/>
            <person name="Flores M."/>
            <person name="Liguori R."/>
            <person name="Vitale D."/>
            <person name="Mannhaupt G."/>
            <person name="Haase D."/>
            <person name="Schoof H."/>
            <person name="Rudd S."/>
            <person name="Zaccaria P."/>
            <person name="Mewes H.-W."/>
            <person name="Mayer K.F.X."/>
            <person name="Kaul S."/>
            <person name="Town C.D."/>
            <person name="Koo H.L."/>
            <person name="Tallon L.J."/>
            <person name="Jenkins J."/>
            <person name="Rooney T."/>
            <person name="Rizzo M."/>
            <person name="Walts A."/>
            <person name="Utterback T."/>
            <person name="Fujii C.Y."/>
            <person name="Shea T.P."/>
            <person name="Creasy T.H."/>
            <person name="Haas B."/>
            <person name="Maiti R."/>
            <person name="Wu D."/>
            <person name="Peterson J."/>
            <person name="Van Aken S."/>
            <person name="Pai G."/>
            <person name="Militscher J."/>
            <person name="Sellers P."/>
            <person name="Gill J.E."/>
            <person name="Feldblyum T.V."/>
            <person name="Preuss D."/>
            <person name="Lin X."/>
            <person name="Nierman W.C."/>
            <person name="Salzberg S.L."/>
            <person name="White O."/>
            <person name="Venter J.C."/>
            <person name="Fraser C.M."/>
            <person name="Kaneko T."/>
            <person name="Nakamura Y."/>
            <person name="Sato S."/>
            <person name="Kato T."/>
            <person name="Asamizu E."/>
            <person name="Sasamoto S."/>
            <person name="Kimura T."/>
            <person name="Idesawa K."/>
            <person name="Kawashima K."/>
            <person name="Kishida Y."/>
            <person name="Kiyokawa C."/>
            <person name="Kohara M."/>
            <person name="Matsumoto M."/>
            <person name="Matsuno A."/>
            <person name="Muraki A."/>
            <person name="Nakayama S."/>
            <person name="Nakazaki N."/>
            <person name="Shinpo S."/>
            <person name="Takeuchi C."/>
            <person name="Wada T."/>
            <person name="Watanabe A."/>
            <person name="Yamada M."/>
            <person name="Yasuda M."/>
            <person name="Tabata S."/>
        </authorList>
    </citation>
    <scope>NUCLEOTIDE SEQUENCE [LARGE SCALE GENOMIC DNA]</scope>
    <source>
        <strain>cv. Columbia</strain>
    </source>
</reference>
<reference key="2">
    <citation type="journal article" date="2017" name="Plant J.">
        <title>Araport11: a complete reannotation of the Arabidopsis thaliana reference genome.</title>
        <authorList>
            <person name="Cheng C.Y."/>
            <person name="Krishnakumar V."/>
            <person name="Chan A.P."/>
            <person name="Thibaud-Nissen F."/>
            <person name="Schobel S."/>
            <person name="Town C.D."/>
        </authorList>
    </citation>
    <scope>GENOME REANNOTATION</scope>
    <source>
        <strain>cv. Columbia</strain>
    </source>
</reference>
<reference key="3">
    <citation type="submission" date="2006-07" db="EMBL/GenBank/DDBJ databases">
        <title>Large-scale analysis of RIKEN Arabidopsis full-length (RAFL) cDNAs.</title>
        <authorList>
            <person name="Totoki Y."/>
            <person name="Seki M."/>
            <person name="Ishida J."/>
            <person name="Nakajima M."/>
            <person name="Enju A."/>
            <person name="Kamiya A."/>
            <person name="Narusaka M."/>
            <person name="Shin-i T."/>
            <person name="Nakagawa M."/>
            <person name="Sakamoto N."/>
            <person name="Oishi K."/>
            <person name="Kohara Y."/>
            <person name="Kobayashi M."/>
            <person name="Toyoda A."/>
            <person name="Sakaki Y."/>
            <person name="Sakurai T."/>
            <person name="Iida K."/>
            <person name="Akiyama K."/>
            <person name="Satou M."/>
            <person name="Toyoda T."/>
            <person name="Konagaya A."/>
            <person name="Carninci P."/>
            <person name="Kawai J."/>
            <person name="Hayashizaki Y."/>
            <person name="Shinozaki K."/>
        </authorList>
    </citation>
    <scope>NUCLEOTIDE SEQUENCE [LARGE SCALE MRNA]</scope>
    <source>
        <strain>cv. Columbia</strain>
    </source>
</reference>
<reference key="4">
    <citation type="journal article" date="2004" name="Plant Cell">
        <title>Genome-wide analysis of Arabidopsis pentatricopeptide repeat proteins reveals their essential role in organelle biogenesis.</title>
        <authorList>
            <person name="Lurin C."/>
            <person name="Andres C."/>
            <person name="Aubourg S."/>
            <person name="Bellaoui M."/>
            <person name="Bitton F."/>
            <person name="Bruyere C."/>
            <person name="Caboche M."/>
            <person name="Debast C."/>
            <person name="Gualberto J."/>
            <person name="Hoffmann B."/>
            <person name="Lecharny A."/>
            <person name="Le Ret M."/>
            <person name="Martin-Magniette M.-L."/>
            <person name="Mireau H."/>
            <person name="Peeters N."/>
            <person name="Renou J.-P."/>
            <person name="Szurek B."/>
            <person name="Taconnat L."/>
            <person name="Small I."/>
        </authorList>
    </citation>
    <scope>GENE FAMILY</scope>
</reference>
<dbReference type="EMBL" id="AL137082">
    <property type="protein sequence ID" value="CAB68197.1"/>
    <property type="status" value="ALT_SEQ"/>
    <property type="molecule type" value="Genomic_DNA"/>
</dbReference>
<dbReference type="EMBL" id="CP002686">
    <property type="protein sequence ID" value="AEE79802.1"/>
    <property type="molecule type" value="Genomic_DNA"/>
</dbReference>
<dbReference type="EMBL" id="AK229655">
    <property type="protein sequence ID" value="BAF01499.1"/>
    <property type="molecule type" value="mRNA"/>
</dbReference>
<dbReference type="PIR" id="T45679">
    <property type="entry name" value="T45679"/>
</dbReference>
<dbReference type="RefSeq" id="NP_191418.2">
    <property type="nucleotide sequence ID" value="NM_115721.3"/>
</dbReference>
<dbReference type="SMR" id="Q0WN01"/>
<dbReference type="FunCoup" id="Q0WN01">
    <property type="interactions" value="488"/>
</dbReference>
<dbReference type="STRING" id="3702.Q0WN01"/>
<dbReference type="GlyGen" id="Q0WN01">
    <property type="glycosylation" value="1 site"/>
</dbReference>
<dbReference type="PaxDb" id="3702-AT3G58590.1"/>
<dbReference type="EnsemblPlants" id="AT3G58590.1">
    <property type="protein sequence ID" value="AT3G58590.1"/>
    <property type="gene ID" value="AT3G58590"/>
</dbReference>
<dbReference type="GeneID" id="825028"/>
<dbReference type="Gramene" id="AT3G58590.1">
    <property type="protein sequence ID" value="AT3G58590.1"/>
    <property type="gene ID" value="AT3G58590"/>
</dbReference>
<dbReference type="KEGG" id="ath:AT3G58590"/>
<dbReference type="Araport" id="AT3G58590"/>
<dbReference type="TAIR" id="AT3G58590"/>
<dbReference type="eggNOG" id="KOG4197">
    <property type="taxonomic scope" value="Eukaryota"/>
</dbReference>
<dbReference type="HOGENOM" id="CLU_002706_15_6_1"/>
<dbReference type="InParanoid" id="Q0WN01"/>
<dbReference type="OMA" id="EPDMDHY"/>
<dbReference type="PhylomeDB" id="Q0WN01"/>
<dbReference type="PRO" id="PR:Q0WN01"/>
<dbReference type="Proteomes" id="UP000006548">
    <property type="component" value="Chromosome 3"/>
</dbReference>
<dbReference type="ExpressionAtlas" id="Q0WN01">
    <property type="expression patterns" value="baseline and differential"/>
</dbReference>
<dbReference type="GO" id="GO:0003723">
    <property type="term" value="F:RNA binding"/>
    <property type="evidence" value="ECO:0007669"/>
    <property type="project" value="InterPro"/>
</dbReference>
<dbReference type="GO" id="GO:0009451">
    <property type="term" value="P:RNA modification"/>
    <property type="evidence" value="ECO:0007669"/>
    <property type="project" value="InterPro"/>
</dbReference>
<dbReference type="FunFam" id="1.25.40.10:FF:001096">
    <property type="entry name" value="Pentatricopeptide repeat-containing protein"/>
    <property type="match status" value="1"/>
</dbReference>
<dbReference type="FunFam" id="1.25.40.10:FF:000343">
    <property type="entry name" value="Pentatricopeptide repeat-containing protein At3g58590"/>
    <property type="match status" value="2"/>
</dbReference>
<dbReference type="FunFam" id="1.25.40.10:FF:001791">
    <property type="entry name" value="Pentatricopeptide repeat-containing protein At3g58590"/>
    <property type="match status" value="1"/>
</dbReference>
<dbReference type="FunFam" id="1.25.40.10:FF:001823">
    <property type="entry name" value="Pentatricopeptide repeat-containing protein At3g58590"/>
    <property type="match status" value="1"/>
</dbReference>
<dbReference type="FunFam" id="1.25.40.10:FF:002489">
    <property type="entry name" value="Pentatricopeptide repeat-containing protein At3g58590"/>
    <property type="match status" value="1"/>
</dbReference>
<dbReference type="Gene3D" id="1.25.40.10">
    <property type="entry name" value="Tetratricopeptide repeat domain"/>
    <property type="match status" value="6"/>
</dbReference>
<dbReference type="InterPro" id="IPR002885">
    <property type="entry name" value="Pentatricopeptide_rpt"/>
</dbReference>
<dbReference type="InterPro" id="IPR046960">
    <property type="entry name" value="PPR_At4g14850-like_plant"/>
</dbReference>
<dbReference type="InterPro" id="IPR011990">
    <property type="entry name" value="TPR-like_helical_dom_sf"/>
</dbReference>
<dbReference type="NCBIfam" id="TIGR00756">
    <property type="entry name" value="PPR"/>
    <property type="match status" value="6"/>
</dbReference>
<dbReference type="PANTHER" id="PTHR47926">
    <property type="entry name" value="PENTATRICOPEPTIDE REPEAT-CONTAINING PROTEIN"/>
    <property type="match status" value="1"/>
</dbReference>
<dbReference type="PANTHER" id="PTHR47926:SF423">
    <property type="entry name" value="REPEAT-CONTAINING PROTEIN, PUTATIVE-RELATED"/>
    <property type="match status" value="1"/>
</dbReference>
<dbReference type="Pfam" id="PF01535">
    <property type="entry name" value="PPR"/>
    <property type="match status" value="7"/>
</dbReference>
<dbReference type="Pfam" id="PF13041">
    <property type="entry name" value="PPR_2"/>
    <property type="match status" value="4"/>
</dbReference>
<dbReference type="PROSITE" id="PS51375">
    <property type="entry name" value="PPR"/>
    <property type="match status" value="15"/>
</dbReference>
<feature type="chain" id="PRO_0000356145" description="Pentatricopeptide repeat-containing protein At3g58590">
    <location>
        <begin position="1"/>
        <end position="741"/>
    </location>
</feature>
<feature type="repeat" description="PPR 1">
    <location>
        <begin position="48"/>
        <end position="78"/>
    </location>
</feature>
<feature type="repeat" description="PPR 2">
    <location>
        <begin position="79"/>
        <end position="113"/>
    </location>
</feature>
<feature type="repeat" description="PPR 3">
    <location>
        <begin position="114"/>
        <end position="146"/>
    </location>
</feature>
<feature type="repeat" description="PPR 4">
    <location>
        <begin position="148"/>
        <end position="178"/>
    </location>
</feature>
<feature type="repeat" description="PPR 5">
    <location>
        <begin position="179"/>
        <end position="213"/>
    </location>
</feature>
<feature type="repeat" description="PPR 6">
    <location>
        <begin position="214"/>
        <end position="248"/>
    </location>
</feature>
<feature type="repeat" description="PPR 7">
    <location>
        <begin position="249"/>
        <end position="279"/>
    </location>
</feature>
<feature type="repeat" description="PPR 8">
    <location>
        <begin position="280"/>
        <end position="314"/>
    </location>
</feature>
<feature type="repeat" description="PPR 9">
    <location>
        <begin position="315"/>
        <end position="349"/>
    </location>
</feature>
<feature type="repeat" description="PPR 10">
    <location>
        <begin position="350"/>
        <end position="380"/>
    </location>
</feature>
<feature type="repeat" description="PPR 11">
    <location>
        <begin position="381"/>
        <end position="414"/>
    </location>
</feature>
<feature type="repeat" description="PPR 12">
    <location>
        <begin position="415"/>
        <end position="445"/>
    </location>
</feature>
<feature type="repeat" description="PPR 13">
    <location>
        <begin position="446"/>
        <end position="481"/>
    </location>
</feature>
<feature type="repeat" description="PPR 14">
    <location>
        <begin position="483"/>
        <end position="508"/>
    </location>
</feature>
<feature type="repeat" description="PPR 15">
    <location>
        <begin position="509"/>
        <end position="543"/>
    </location>
</feature>
<feature type="repeat" description="PPR 16">
    <location>
        <begin position="544"/>
        <end position="578"/>
    </location>
</feature>
<feature type="repeat" description="PPR 17">
    <location>
        <begin position="580"/>
        <end position="610"/>
    </location>
</feature>
<feature type="repeat" description="PPR 18">
    <location>
        <begin position="611"/>
        <end position="645"/>
    </location>
</feature>
<feature type="repeat" description="PPR 19">
    <location>
        <begin position="646"/>
        <end position="680"/>
    </location>
</feature>
<feature type="repeat" description="PPR 20">
    <location>
        <begin position="681"/>
        <end position="715"/>
    </location>
</feature>
<feature type="sequence conflict" description="In Ref. 3; BAF01499." evidence="1" ref="3">
    <original>E</original>
    <variation>G</variation>
    <location>
        <position position="681"/>
    </location>
</feature>
<gene>
    <name type="ordered locus">At3g58590</name>
    <name type="ORF">F14P22.180</name>
</gene>